<evidence type="ECO:0000255" key="1">
    <source>
        <dbReference type="HAMAP-Rule" id="MF_00036"/>
    </source>
</evidence>
<keyword id="KW-0030">Aminoacyl-tRNA synthetase</keyword>
<keyword id="KW-0067">ATP-binding</keyword>
<keyword id="KW-0963">Cytoplasm</keyword>
<keyword id="KW-0436">Ligase</keyword>
<keyword id="KW-0479">Metal-binding</keyword>
<keyword id="KW-0547">Nucleotide-binding</keyword>
<keyword id="KW-0648">Protein biosynthesis</keyword>
<keyword id="KW-0694">RNA-binding</keyword>
<keyword id="KW-0820">tRNA-binding</keyword>
<keyword id="KW-0862">Zinc</keyword>
<sequence length="882" mass="95259">MNAPAKFSTSQIRSDFLAFFEGKGHTIVPSAPLVPGNDPTLLFTNSGMVQFKDVFLGAEKRSYVRAADVQRCLRAGGKHNDLDSVGYTARHHTFFEMLGNWSFGDYFKKDAIAWAWELLTQVWKLPADRLLVTVYHTDEEAFALWRDVIGIPESRIVRIGDNKGAPYASDNFWQMADTGPCGPCTEIFFDHGDHIAGGPPGSPDEDGDRFIEIWNLVFMQFDRQPDGTLVPLPAPCVDTGMGLERLAAILQHVHTNYEIDLFQTLIGKAGSLTGVADLENKSLRVIADHIRACSFLIVDGVLPSNEGRGYVLRRIIRRALRHGWMLGVRQPFFSKMVPTLVELMGEAYPELVVAKDTVARALSAEEERFAETLDAGMKIFDEVASRSQDIIPGADAFRLYDTYGFPVDLTADIARERGMRVDMEGFEFAMERQRETARAAGKFGGGVALPADLVASMSPTVFLGYEAYDADALKVVAILRQGRPVERAEAGDEVIVFTDRTPFYAESGGQVGDSGQLSGPGVSVEVADTQKFAGQFHGHVGRISEGALALGDVLAGEIDTQRRGKTILNHSATHLLHAALREVLGTHVQQKGSLVAPDRLRFDFSHFQPITADELAVIERKVNAEVRTNHGVEVHNMAMQEALDFGAMALFGEKYGENVRVLKMGGYSTELCGGTHVTRTGDIGLFKITSEGGVSSGVRRIEAVTGQGALDYVADEERRLLEAANLLGGNTTEVVDKVRALTERQKRLERELESLKAKLASGATADLGARAIDVAGVKVVAVRLEGFDAKALRDAMDRLKQQLGDSVIVLAGASGGKVALVAGVNGSPTGKVKAGELLGHIASQIGGKGGGRPDLAQGGGEDGPALATALDGVPLWVKQHLG</sequence>
<comment type="function">
    <text evidence="1">Catalyzes the attachment of alanine to tRNA(Ala) in a two-step reaction: alanine is first activated by ATP to form Ala-AMP and then transferred to the acceptor end of tRNA(Ala). Also edits incorrectly charged Ser-tRNA(Ala) and Gly-tRNA(Ala) via its editing domain.</text>
</comment>
<comment type="catalytic activity">
    <reaction evidence="1">
        <text>tRNA(Ala) + L-alanine + ATP = L-alanyl-tRNA(Ala) + AMP + diphosphate</text>
        <dbReference type="Rhea" id="RHEA:12540"/>
        <dbReference type="Rhea" id="RHEA-COMP:9657"/>
        <dbReference type="Rhea" id="RHEA-COMP:9923"/>
        <dbReference type="ChEBI" id="CHEBI:30616"/>
        <dbReference type="ChEBI" id="CHEBI:33019"/>
        <dbReference type="ChEBI" id="CHEBI:57972"/>
        <dbReference type="ChEBI" id="CHEBI:78442"/>
        <dbReference type="ChEBI" id="CHEBI:78497"/>
        <dbReference type="ChEBI" id="CHEBI:456215"/>
        <dbReference type="EC" id="6.1.1.7"/>
    </reaction>
</comment>
<comment type="cofactor">
    <cofactor evidence="1">
        <name>Zn(2+)</name>
        <dbReference type="ChEBI" id="CHEBI:29105"/>
    </cofactor>
    <text evidence="1">Binds 1 zinc ion per subunit.</text>
</comment>
<comment type="subcellular location">
    <subcellularLocation>
        <location evidence="1">Cytoplasm</location>
    </subcellularLocation>
</comment>
<comment type="domain">
    <text evidence="1">Consists of three domains; the N-terminal catalytic domain, the editing domain and the C-terminal C-Ala domain. The editing domain removes incorrectly charged amino acids, while the C-Ala domain, along with tRNA(Ala), serves as a bridge to cooperatively bring together the editing and aminoacylation centers thus stimulating deacylation of misacylated tRNAs.</text>
</comment>
<comment type="similarity">
    <text evidence="1">Belongs to the class-II aminoacyl-tRNA synthetase family.</text>
</comment>
<proteinExistence type="inferred from homology"/>
<dbReference type="EC" id="6.1.1.7" evidence="1"/>
<dbReference type="EMBL" id="AE008923">
    <property type="protein sequence ID" value="AAM36609.1"/>
    <property type="molecule type" value="Genomic_DNA"/>
</dbReference>
<dbReference type="RefSeq" id="WP_011051114.1">
    <property type="nucleotide sequence ID" value="NC_003919.1"/>
</dbReference>
<dbReference type="SMR" id="Q8PLQ0"/>
<dbReference type="GeneID" id="66910892"/>
<dbReference type="KEGG" id="xac:XAC1742"/>
<dbReference type="eggNOG" id="COG0013">
    <property type="taxonomic scope" value="Bacteria"/>
</dbReference>
<dbReference type="HOGENOM" id="CLU_004485_1_1_6"/>
<dbReference type="Proteomes" id="UP000000576">
    <property type="component" value="Chromosome"/>
</dbReference>
<dbReference type="GO" id="GO:0005829">
    <property type="term" value="C:cytosol"/>
    <property type="evidence" value="ECO:0007669"/>
    <property type="project" value="TreeGrafter"/>
</dbReference>
<dbReference type="GO" id="GO:0004813">
    <property type="term" value="F:alanine-tRNA ligase activity"/>
    <property type="evidence" value="ECO:0007669"/>
    <property type="project" value="UniProtKB-UniRule"/>
</dbReference>
<dbReference type="GO" id="GO:0002161">
    <property type="term" value="F:aminoacyl-tRNA deacylase activity"/>
    <property type="evidence" value="ECO:0007669"/>
    <property type="project" value="TreeGrafter"/>
</dbReference>
<dbReference type="GO" id="GO:0005524">
    <property type="term" value="F:ATP binding"/>
    <property type="evidence" value="ECO:0007669"/>
    <property type="project" value="UniProtKB-UniRule"/>
</dbReference>
<dbReference type="GO" id="GO:0000049">
    <property type="term" value="F:tRNA binding"/>
    <property type="evidence" value="ECO:0007669"/>
    <property type="project" value="UniProtKB-KW"/>
</dbReference>
<dbReference type="GO" id="GO:0008270">
    <property type="term" value="F:zinc ion binding"/>
    <property type="evidence" value="ECO:0007669"/>
    <property type="project" value="UniProtKB-UniRule"/>
</dbReference>
<dbReference type="GO" id="GO:0006419">
    <property type="term" value="P:alanyl-tRNA aminoacylation"/>
    <property type="evidence" value="ECO:0007669"/>
    <property type="project" value="UniProtKB-UniRule"/>
</dbReference>
<dbReference type="GO" id="GO:0045892">
    <property type="term" value="P:negative regulation of DNA-templated transcription"/>
    <property type="evidence" value="ECO:0007669"/>
    <property type="project" value="TreeGrafter"/>
</dbReference>
<dbReference type="CDD" id="cd00673">
    <property type="entry name" value="AlaRS_core"/>
    <property type="match status" value="1"/>
</dbReference>
<dbReference type="FunFam" id="3.10.310.40:FF:000001">
    <property type="entry name" value="Alanine--tRNA ligase"/>
    <property type="match status" value="1"/>
</dbReference>
<dbReference type="FunFam" id="3.30.54.20:FF:000001">
    <property type="entry name" value="Alanine--tRNA ligase"/>
    <property type="match status" value="1"/>
</dbReference>
<dbReference type="FunFam" id="3.30.930.10:FF:000004">
    <property type="entry name" value="Alanine--tRNA ligase"/>
    <property type="match status" value="1"/>
</dbReference>
<dbReference type="FunFam" id="3.30.980.10:FF:000004">
    <property type="entry name" value="Alanine--tRNA ligase, cytoplasmic"/>
    <property type="match status" value="1"/>
</dbReference>
<dbReference type="Gene3D" id="2.40.30.130">
    <property type="match status" value="1"/>
</dbReference>
<dbReference type="Gene3D" id="3.10.310.40">
    <property type="match status" value="1"/>
</dbReference>
<dbReference type="Gene3D" id="3.30.54.20">
    <property type="match status" value="1"/>
</dbReference>
<dbReference type="Gene3D" id="6.10.250.550">
    <property type="match status" value="1"/>
</dbReference>
<dbReference type="Gene3D" id="3.30.930.10">
    <property type="entry name" value="Bira Bifunctional Protein, Domain 2"/>
    <property type="match status" value="1"/>
</dbReference>
<dbReference type="Gene3D" id="3.30.980.10">
    <property type="entry name" value="Threonyl-trna Synthetase, Chain A, domain 2"/>
    <property type="match status" value="1"/>
</dbReference>
<dbReference type="HAMAP" id="MF_00036_B">
    <property type="entry name" value="Ala_tRNA_synth_B"/>
    <property type="match status" value="1"/>
</dbReference>
<dbReference type="InterPro" id="IPR045864">
    <property type="entry name" value="aa-tRNA-synth_II/BPL/LPL"/>
</dbReference>
<dbReference type="InterPro" id="IPR002318">
    <property type="entry name" value="Ala-tRNA-lgiase_IIc"/>
</dbReference>
<dbReference type="InterPro" id="IPR018162">
    <property type="entry name" value="Ala-tRNA-ligase_IIc_anticod-bd"/>
</dbReference>
<dbReference type="InterPro" id="IPR018165">
    <property type="entry name" value="Ala-tRNA-synth_IIc_core"/>
</dbReference>
<dbReference type="InterPro" id="IPR018164">
    <property type="entry name" value="Ala-tRNA-synth_IIc_N"/>
</dbReference>
<dbReference type="InterPro" id="IPR050058">
    <property type="entry name" value="Ala-tRNA_ligase"/>
</dbReference>
<dbReference type="InterPro" id="IPR023033">
    <property type="entry name" value="Ala_tRNA_ligase_euk/bac"/>
</dbReference>
<dbReference type="InterPro" id="IPR003156">
    <property type="entry name" value="DHHA1_dom"/>
</dbReference>
<dbReference type="InterPro" id="IPR018163">
    <property type="entry name" value="Thr/Ala-tRNA-synth_IIc_edit"/>
</dbReference>
<dbReference type="InterPro" id="IPR009000">
    <property type="entry name" value="Transl_B-barrel_sf"/>
</dbReference>
<dbReference type="InterPro" id="IPR012947">
    <property type="entry name" value="tRNA_SAD"/>
</dbReference>
<dbReference type="NCBIfam" id="TIGR00344">
    <property type="entry name" value="alaS"/>
    <property type="match status" value="1"/>
</dbReference>
<dbReference type="PANTHER" id="PTHR11777:SF9">
    <property type="entry name" value="ALANINE--TRNA LIGASE, CYTOPLASMIC"/>
    <property type="match status" value="1"/>
</dbReference>
<dbReference type="PANTHER" id="PTHR11777">
    <property type="entry name" value="ALANYL-TRNA SYNTHETASE"/>
    <property type="match status" value="1"/>
</dbReference>
<dbReference type="Pfam" id="PF02272">
    <property type="entry name" value="DHHA1"/>
    <property type="match status" value="1"/>
</dbReference>
<dbReference type="Pfam" id="PF01411">
    <property type="entry name" value="tRNA-synt_2c"/>
    <property type="match status" value="1"/>
</dbReference>
<dbReference type="Pfam" id="PF07973">
    <property type="entry name" value="tRNA_SAD"/>
    <property type="match status" value="1"/>
</dbReference>
<dbReference type="PRINTS" id="PR00980">
    <property type="entry name" value="TRNASYNTHALA"/>
</dbReference>
<dbReference type="SMART" id="SM00863">
    <property type="entry name" value="tRNA_SAD"/>
    <property type="match status" value="1"/>
</dbReference>
<dbReference type="SUPFAM" id="SSF55681">
    <property type="entry name" value="Class II aaRS and biotin synthetases"/>
    <property type="match status" value="1"/>
</dbReference>
<dbReference type="SUPFAM" id="SSF101353">
    <property type="entry name" value="Putative anticodon-binding domain of alanyl-tRNA synthetase (AlaRS)"/>
    <property type="match status" value="1"/>
</dbReference>
<dbReference type="SUPFAM" id="SSF55186">
    <property type="entry name" value="ThrRS/AlaRS common domain"/>
    <property type="match status" value="1"/>
</dbReference>
<dbReference type="SUPFAM" id="SSF50447">
    <property type="entry name" value="Translation proteins"/>
    <property type="match status" value="1"/>
</dbReference>
<dbReference type="PROSITE" id="PS50860">
    <property type="entry name" value="AA_TRNA_LIGASE_II_ALA"/>
    <property type="match status" value="1"/>
</dbReference>
<feature type="chain" id="PRO_0000075250" description="Alanine--tRNA ligase">
    <location>
        <begin position="1"/>
        <end position="882"/>
    </location>
</feature>
<feature type="binding site" evidence="1">
    <location>
        <position position="570"/>
    </location>
    <ligand>
        <name>Zn(2+)</name>
        <dbReference type="ChEBI" id="CHEBI:29105"/>
    </ligand>
</feature>
<feature type="binding site" evidence="1">
    <location>
        <position position="574"/>
    </location>
    <ligand>
        <name>Zn(2+)</name>
        <dbReference type="ChEBI" id="CHEBI:29105"/>
    </ligand>
</feature>
<feature type="binding site" evidence="1">
    <location>
        <position position="672"/>
    </location>
    <ligand>
        <name>Zn(2+)</name>
        <dbReference type="ChEBI" id="CHEBI:29105"/>
    </ligand>
</feature>
<feature type="binding site" evidence="1">
    <location>
        <position position="676"/>
    </location>
    <ligand>
        <name>Zn(2+)</name>
        <dbReference type="ChEBI" id="CHEBI:29105"/>
    </ligand>
</feature>
<accession>Q8PLQ0</accession>
<reference key="1">
    <citation type="journal article" date="2002" name="Nature">
        <title>Comparison of the genomes of two Xanthomonas pathogens with differing host specificities.</title>
        <authorList>
            <person name="da Silva A.C.R."/>
            <person name="Ferro J.A."/>
            <person name="Reinach F.C."/>
            <person name="Farah C.S."/>
            <person name="Furlan L.R."/>
            <person name="Quaggio R.B."/>
            <person name="Monteiro-Vitorello C.B."/>
            <person name="Van Sluys M.A."/>
            <person name="Almeida N.F. Jr."/>
            <person name="Alves L.M.C."/>
            <person name="do Amaral A.M."/>
            <person name="Bertolini M.C."/>
            <person name="Camargo L.E.A."/>
            <person name="Camarotte G."/>
            <person name="Cannavan F."/>
            <person name="Cardozo J."/>
            <person name="Chambergo F."/>
            <person name="Ciapina L.P."/>
            <person name="Cicarelli R.M.B."/>
            <person name="Coutinho L.L."/>
            <person name="Cursino-Santos J.R."/>
            <person name="El-Dorry H."/>
            <person name="Faria J.B."/>
            <person name="Ferreira A.J.S."/>
            <person name="Ferreira R.C.C."/>
            <person name="Ferro M.I.T."/>
            <person name="Formighieri E.F."/>
            <person name="Franco M.C."/>
            <person name="Greggio C.C."/>
            <person name="Gruber A."/>
            <person name="Katsuyama A.M."/>
            <person name="Kishi L.T."/>
            <person name="Leite R.P."/>
            <person name="Lemos E.G.M."/>
            <person name="Lemos M.V.F."/>
            <person name="Locali E.C."/>
            <person name="Machado M.A."/>
            <person name="Madeira A.M.B.N."/>
            <person name="Martinez-Rossi N.M."/>
            <person name="Martins E.C."/>
            <person name="Meidanis J."/>
            <person name="Menck C.F.M."/>
            <person name="Miyaki C.Y."/>
            <person name="Moon D.H."/>
            <person name="Moreira L.M."/>
            <person name="Novo M.T.M."/>
            <person name="Okura V.K."/>
            <person name="Oliveira M.C."/>
            <person name="Oliveira V.R."/>
            <person name="Pereira H.A."/>
            <person name="Rossi A."/>
            <person name="Sena J.A.D."/>
            <person name="Silva C."/>
            <person name="de Souza R.F."/>
            <person name="Spinola L.A.F."/>
            <person name="Takita M.A."/>
            <person name="Tamura R.E."/>
            <person name="Teixeira E.C."/>
            <person name="Tezza R.I.D."/>
            <person name="Trindade dos Santos M."/>
            <person name="Truffi D."/>
            <person name="Tsai S.M."/>
            <person name="White F.F."/>
            <person name="Setubal J.C."/>
            <person name="Kitajima J.P."/>
        </authorList>
    </citation>
    <scope>NUCLEOTIDE SEQUENCE [LARGE SCALE GENOMIC DNA]</scope>
    <source>
        <strain>306</strain>
    </source>
</reference>
<name>SYA_XANAC</name>
<organism>
    <name type="scientific">Xanthomonas axonopodis pv. citri (strain 306)</name>
    <dbReference type="NCBI Taxonomy" id="190486"/>
    <lineage>
        <taxon>Bacteria</taxon>
        <taxon>Pseudomonadati</taxon>
        <taxon>Pseudomonadota</taxon>
        <taxon>Gammaproteobacteria</taxon>
        <taxon>Lysobacterales</taxon>
        <taxon>Lysobacteraceae</taxon>
        <taxon>Xanthomonas</taxon>
    </lineage>
</organism>
<gene>
    <name evidence="1" type="primary">alaS</name>
    <name type="ordered locus">XAC1742</name>
</gene>
<protein>
    <recommendedName>
        <fullName evidence="1">Alanine--tRNA ligase</fullName>
        <ecNumber evidence="1">6.1.1.7</ecNumber>
    </recommendedName>
    <alternativeName>
        <fullName evidence="1">Alanyl-tRNA synthetase</fullName>
        <shortName evidence="1">AlaRS</shortName>
    </alternativeName>
</protein>